<reference key="1">
    <citation type="journal article" date="2001" name="Science">
        <title>Mechanisms of evolution in Rickettsia conorii and R. prowazekii.</title>
        <authorList>
            <person name="Ogata H."/>
            <person name="Audic S."/>
            <person name="Renesto-Audiffren P."/>
            <person name="Fournier P.-E."/>
            <person name="Barbe V."/>
            <person name="Samson D."/>
            <person name="Roux V."/>
            <person name="Cossart P."/>
            <person name="Weissenbach J."/>
            <person name="Claverie J.-M."/>
            <person name="Raoult D."/>
        </authorList>
    </citation>
    <scope>NUCLEOTIDE SEQUENCE [LARGE SCALE GENOMIC DNA]</scope>
    <source>
        <strain>ATCC VR-613 / Malish 7</strain>
    </source>
</reference>
<evidence type="ECO:0000255" key="1">
    <source>
        <dbReference type="HAMAP-Rule" id="MF_00332"/>
    </source>
</evidence>
<evidence type="ECO:0000256" key="2">
    <source>
        <dbReference type="SAM" id="MobiDB-lite"/>
    </source>
</evidence>
<gene>
    <name evidence="1" type="primary">dnaK</name>
    <name type="ordered locus">RC0233</name>
</gene>
<accession>Q92J36</accession>
<keyword id="KW-0067">ATP-binding</keyword>
<keyword id="KW-0143">Chaperone</keyword>
<keyword id="KW-0547">Nucleotide-binding</keyword>
<keyword id="KW-0597">Phosphoprotein</keyword>
<keyword id="KW-0346">Stress response</keyword>
<name>DNAK_RICCN</name>
<comment type="function">
    <text evidence="1">Acts as a chaperone.</text>
</comment>
<comment type="induction">
    <text evidence="1">By stress conditions e.g. heat shock.</text>
</comment>
<comment type="similarity">
    <text evidence="1">Belongs to the heat shock protein 70 family.</text>
</comment>
<sequence>MGKVIGIDLGTTNSCVAVMEGKEPKVIENAEGERTTPSIIAFANGEKLVGQSAKRQAVTNPRNTIYAVKRLIGRNFIDPMVRKDQGIVPYNIVKADNGDAWVEADNNKYSPSQISAFILQKMKETAENYLGDKVTQAVITVPAYFNDAQRQATKDAGKIAGLEVLRIINEPTAAALAYGFEKSASKTIAVYDLGGGTFDVSILEIADGVFEVKSTNGDTFLGGEDFDTRILNHLIDVFKKENGIDLSKDPLALQRLKEAAEKAKKELSSAVTTDINLPYITADSSGPKHLNIKFTRAELEKLVDDLIEKTIEPCRKALQDAGFKASDIQEVVLVGGMTRMPKVQEAVKKFFGREPHKGVNPDEVVALGAAIQGGVLNKEVTDILLLDVTPLSLGIETLGGVFTRLIDRNTTIPTKKSQIFSTADDNQHAVTIRVFQGEREMAKDNKLLGQFNLEGIPLAPRGLPQIEVTFDIDANGIVHVSAKDKASGKEQKVTIQASGGLSDAEIEQMVKDAEQNADEDKKRKELIEAKNAADSLVYSTEKTLTEYGDKLSSDDKGAVEAALAALKAVLESEDTALIKEKTESLTAASMKIGEAMYKAQSESQPAAESATNDEKIVDADFQDVEKK</sequence>
<dbReference type="EMBL" id="AE006914">
    <property type="protein sequence ID" value="AAL02771.1"/>
    <property type="molecule type" value="Genomic_DNA"/>
</dbReference>
<dbReference type="PIR" id="A97729">
    <property type="entry name" value="A97729"/>
</dbReference>
<dbReference type="RefSeq" id="WP_010976896.1">
    <property type="nucleotide sequence ID" value="NC_003103.1"/>
</dbReference>
<dbReference type="SMR" id="Q92J36"/>
<dbReference type="GeneID" id="927952"/>
<dbReference type="KEGG" id="rco:RC0233"/>
<dbReference type="PATRIC" id="fig|272944.4.peg.269"/>
<dbReference type="HOGENOM" id="CLU_005965_2_4_5"/>
<dbReference type="Proteomes" id="UP000000816">
    <property type="component" value="Chromosome"/>
</dbReference>
<dbReference type="GO" id="GO:0005524">
    <property type="term" value="F:ATP binding"/>
    <property type="evidence" value="ECO:0007669"/>
    <property type="project" value="UniProtKB-UniRule"/>
</dbReference>
<dbReference type="GO" id="GO:0140662">
    <property type="term" value="F:ATP-dependent protein folding chaperone"/>
    <property type="evidence" value="ECO:0007669"/>
    <property type="project" value="InterPro"/>
</dbReference>
<dbReference type="GO" id="GO:0051082">
    <property type="term" value="F:unfolded protein binding"/>
    <property type="evidence" value="ECO:0007669"/>
    <property type="project" value="InterPro"/>
</dbReference>
<dbReference type="CDD" id="cd11733">
    <property type="entry name" value="ASKHA_NBD_HSP70_HSPA9"/>
    <property type="match status" value="1"/>
</dbReference>
<dbReference type="FunFam" id="2.60.34.10:FF:000014">
    <property type="entry name" value="Chaperone protein DnaK HSP70"/>
    <property type="match status" value="1"/>
</dbReference>
<dbReference type="FunFam" id="3.30.420.40:FF:000020">
    <property type="entry name" value="Chaperone protein HscA homolog"/>
    <property type="match status" value="1"/>
</dbReference>
<dbReference type="FunFam" id="3.30.30.30:FF:000003">
    <property type="entry name" value="Heat shock protein 9"/>
    <property type="match status" value="1"/>
</dbReference>
<dbReference type="FunFam" id="1.20.1270.10:FF:000001">
    <property type="entry name" value="Molecular chaperone DnaK"/>
    <property type="match status" value="1"/>
</dbReference>
<dbReference type="FunFam" id="3.30.420.40:FF:000004">
    <property type="entry name" value="Molecular chaperone DnaK"/>
    <property type="match status" value="1"/>
</dbReference>
<dbReference type="FunFam" id="3.90.640.10:FF:000003">
    <property type="entry name" value="Molecular chaperone DnaK"/>
    <property type="match status" value="1"/>
</dbReference>
<dbReference type="Gene3D" id="1.20.1270.10">
    <property type="match status" value="1"/>
</dbReference>
<dbReference type="Gene3D" id="3.30.420.40">
    <property type="match status" value="2"/>
</dbReference>
<dbReference type="Gene3D" id="3.90.640.10">
    <property type="entry name" value="Actin, Chain A, domain 4"/>
    <property type="match status" value="1"/>
</dbReference>
<dbReference type="Gene3D" id="2.60.34.10">
    <property type="entry name" value="Substrate Binding Domain Of DNAk, Chain A, domain 1"/>
    <property type="match status" value="1"/>
</dbReference>
<dbReference type="HAMAP" id="MF_00332">
    <property type="entry name" value="DnaK"/>
    <property type="match status" value="1"/>
</dbReference>
<dbReference type="InterPro" id="IPR043129">
    <property type="entry name" value="ATPase_NBD"/>
</dbReference>
<dbReference type="InterPro" id="IPR012725">
    <property type="entry name" value="Chaperone_DnaK"/>
</dbReference>
<dbReference type="InterPro" id="IPR018181">
    <property type="entry name" value="Heat_shock_70_CS"/>
</dbReference>
<dbReference type="InterPro" id="IPR029048">
    <property type="entry name" value="HSP70_C_sf"/>
</dbReference>
<dbReference type="InterPro" id="IPR029047">
    <property type="entry name" value="HSP70_peptide-bd_sf"/>
</dbReference>
<dbReference type="InterPro" id="IPR013126">
    <property type="entry name" value="Hsp_70_fam"/>
</dbReference>
<dbReference type="NCBIfam" id="NF001413">
    <property type="entry name" value="PRK00290.1"/>
    <property type="match status" value="1"/>
</dbReference>
<dbReference type="NCBIfam" id="NF003520">
    <property type="entry name" value="PRK05183.1"/>
    <property type="match status" value="1"/>
</dbReference>
<dbReference type="NCBIfam" id="TIGR02350">
    <property type="entry name" value="prok_dnaK"/>
    <property type="match status" value="1"/>
</dbReference>
<dbReference type="PANTHER" id="PTHR19375">
    <property type="entry name" value="HEAT SHOCK PROTEIN 70KDA"/>
    <property type="match status" value="1"/>
</dbReference>
<dbReference type="Pfam" id="PF00012">
    <property type="entry name" value="HSP70"/>
    <property type="match status" value="1"/>
</dbReference>
<dbReference type="PRINTS" id="PR00301">
    <property type="entry name" value="HEATSHOCK70"/>
</dbReference>
<dbReference type="SUPFAM" id="SSF53067">
    <property type="entry name" value="Actin-like ATPase domain"/>
    <property type="match status" value="2"/>
</dbReference>
<dbReference type="SUPFAM" id="SSF100934">
    <property type="entry name" value="Heat shock protein 70kD (HSP70), C-terminal subdomain"/>
    <property type="match status" value="1"/>
</dbReference>
<dbReference type="SUPFAM" id="SSF100920">
    <property type="entry name" value="Heat shock protein 70kD (HSP70), peptide-binding domain"/>
    <property type="match status" value="1"/>
</dbReference>
<dbReference type="PROSITE" id="PS00297">
    <property type="entry name" value="HSP70_1"/>
    <property type="match status" value="1"/>
</dbReference>
<dbReference type="PROSITE" id="PS00329">
    <property type="entry name" value="HSP70_2"/>
    <property type="match status" value="1"/>
</dbReference>
<dbReference type="PROSITE" id="PS01036">
    <property type="entry name" value="HSP70_3"/>
    <property type="match status" value="1"/>
</dbReference>
<proteinExistence type="inferred from homology"/>
<feature type="chain" id="PRO_0000078529" description="Chaperone protein DnaK">
    <location>
        <begin position="1"/>
        <end position="627"/>
    </location>
</feature>
<feature type="region of interest" description="Disordered" evidence="2">
    <location>
        <begin position="597"/>
        <end position="627"/>
    </location>
</feature>
<feature type="compositionally biased region" description="Low complexity" evidence="2">
    <location>
        <begin position="599"/>
        <end position="610"/>
    </location>
</feature>
<feature type="compositionally biased region" description="Basic and acidic residues" evidence="2">
    <location>
        <begin position="612"/>
        <end position="627"/>
    </location>
</feature>
<feature type="modified residue" description="Phosphothreonine; by autocatalysis" evidence="1">
    <location>
        <position position="197"/>
    </location>
</feature>
<organism>
    <name type="scientific">Rickettsia conorii (strain ATCC VR-613 / Malish 7)</name>
    <dbReference type="NCBI Taxonomy" id="272944"/>
    <lineage>
        <taxon>Bacteria</taxon>
        <taxon>Pseudomonadati</taxon>
        <taxon>Pseudomonadota</taxon>
        <taxon>Alphaproteobacteria</taxon>
        <taxon>Rickettsiales</taxon>
        <taxon>Rickettsiaceae</taxon>
        <taxon>Rickettsieae</taxon>
        <taxon>Rickettsia</taxon>
        <taxon>spotted fever group</taxon>
    </lineage>
</organism>
<protein>
    <recommendedName>
        <fullName evidence="1">Chaperone protein DnaK</fullName>
    </recommendedName>
    <alternativeName>
        <fullName evidence="1">HSP70</fullName>
    </alternativeName>
    <alternativeName>
        <fullName evidence="1">Heat shock 70 kDa protein</fullName>
    </alternativeName>
    <alternativeName>
        <fullName evidence="1">Heat shock protein 70</fullName>
    </alternativeName>
</protein>